<accession>A4XJU0</accession>
<evidence type="ECO:0000255" key="1">
    <source>
        <dbReference type="HAMAP-Rule" id="MF_00418"/>
    </source>
</evidence>
<evidence type="ECO:0000305" key="2"/>
<sequence length="295" mass="32539">MPIFKGSGVALITPFKDEESVDFEVLGRLVDFHLEHKTDAIIVCGTTGEPSTMPDDEHLEVIRFVIDRVAGRKPVIAGVGSNHTKHAVYLSKKAQELGADGLLHVTPYYNKTTQKGLIEHFKEINDAVSIPIIVYNVPSRTGLNILPETMKELSKLPNIRAIKEASGNITQVAEIAMLCPDIDIYSGNDDQIVPVLSVGGIGVISVLANILPDETHDIVEYFLNGQVEKAKELQLKLLPIIKALFIEVNPIPVKEAMNMMGFNVGRPRLPLTTMTEKNREILKKALIDYGINIKE</sequence>
<name>DAPA_CALS8</name>
<reference key="1">
    <citation type="submission" date="2007-04" db="EMBL/GenBank/DDBJ databases">
        <title>Genome sequence of the thermophilic hydrogen-producing bacterium Caldicellulosiruptor saccharolyticus DSM 8903.</title>
        <authorList>
            <person name="Copeland A."/>
            <person name="Lucas S."/>
            <person name="Lapidus A."/>
            <person name="Barry K."/>
            <person name="Detter J.C."/>
            <person name="Glavina del Rio T."/>
            <person name="Hammon N."/>
            <person name="Israni S."/>
            <person name="Dalin E."/>
            <person name="Tice H."/>
            <person name="Pitluck S."/>
            <person name="Kiss H."/>
            <person name="Brettin T."/>
            <person name="Bruce D."/>
            <person name="Han C."/>
            <person name="Schmutz J."/>
            <person name="Larimer F."/>
            <person name="Land M."/>
            <person name="Hauser L."/>
            <person name="Kyrpides N."/>
            <person name="Lykidis A."/>
            <person name="van de Werken H.J.G."/>
            <person name="Verhaart M.R.A."/>
            <person name="VanFossen A.L."/>
            <person name="Lewis D.L."/>
            <person name="Nichols J.D."/>
            <person name="Goorissen H.P."/>
            <person name="van Niel E.W.J."/>
            <person name="Stams F.J.M."/>
            <person name="Willquist K.U."/>
            <person name="Ward D.E."/>
            <person name="van der Oost J."/>
            <person name="Kelly R.M."/>
            <person name="Kengen S.M.W."/>
            <person name="Richardson P."/>
        </authorList>
    </citation>
    <scope>NUCLEOTIDE SEQUENCE [LARGE SCALE GENOMIC DNA]</scope>
    <source>
        <strain>ATCC 43494 / DSM 8903 / Tp8T 6331</strain>
    </source>
</reference>
<protein>
    <recommendedName>
        <fullName evidence="1">4-hydroxy-tetrahydrodipicolinate synthase</fullName>
        <shortName evidence="1">HTPA synthase</shortName>
        <ecNumber evidence="1">4.3.3.7</ecNumber>
    </recommendedName>
</protein>
<comment type="function">
    <text evidence="1">Catalyzes the condensation of (S)-aspartate-beta-semialdehyde [(S)-ASA] and pyruvate to 4-hydroxy-tetrahydrodipicolinate (HTPA).</text>
</comment>
<comment type="catalytic activity">
    <reaction evidence="1">
        <text>L-aspartate 4-semialdehyde + pyruvate = (2S,4S)-4-hydroxy-2,3,4,5-tetrahydrodipicolinate + H2O + H(+)</text>
        <dbReference type="Rhea" id="RHEA:34171"/>
        <dbReference type="ChEBI" id="CHEBI:15361"/>
        <dbReference type="ChEBI" id="CHEBI:15377"/>
        <dbReference type="ChEBI" id="CHEBI:15378"/>
        <dbReference type="ChEBI" id="CHEBI:67139"/>
        <dbReference type="ChEBI" id="CHEBI:537519"/>
        <dbReference type="EC" id="4.3.3.7"/>
    </reaction>
</comment>
<comment type="pathway">
    <text evidence="1">Amino-acid biosynthesis; L-lysine biosynthesis via DAP pathway; (S)-tetrahydrodipicolinate from L-aspartate: step 3/4.</text>
</comment>
<comment type="subunit">
    <text evidence="1">Homotetramer; dimer of dimers.</text>
</comment>
<comment type="subcellular location">
    <subcellularLocation>
        <location evidence="1">Cytoplasm</location>
    </subcellularLocation>
</comment>
<comment type="similarity">
    <text evidence="1">Belongs to the DapA family.</text>
</comment>
<comment type="caution">
    <text evidence="2">Was originally thought to be a dihydrodipicolinate synthase (DHDPS), catalyzing the condensation of (S)-aspartate-beta-semialdehyde [(S)-ASA] and pyruvate to dihydrodipicolinate (DHDP). However, it was shown in E.coli that the product of the enzymatic reaction is not dihydrodipicolinate but in fact (4S)-4-hydroxy-2,3,4,5-tetrahydro-(2S)-dipicolinic acid (HTPA), and that the consecutive dehydration reaction leading to DHDP is not spontaneous but catalyzed by DapB.</text>
</comment>
<organism>
    <name type="scientific">Caldicellulosiruptor saccharolyticus (strain ATCC 43494 / DSM 8903 / Tp8T 6331)</name>
    <dbReference type="NCBI Taxonomy" id="351627"/>
    <lineage>
        <taxon>Bacteria</taxon>
        <taxon>Bacillati</taxon>
        <taxon>Bacillota</taxon>
        <taxon>Bacillota incertae sedis</taxon>
        <taxon>Caldicellulosiruptorales</taxon>
        <taxon>Caldicellulosiruptoraceae</taxon>
        <taxon>Caldicellulosiruptor</taxon>
    </lineage>
</organism>
<proteinExistence type="inferred from homology"/>
<feature type="chain" id="PRO_1000050170" description="4-hydroxy-tetrahydrodipicolinate synthase">
    <location>
        <begin position="1"/>
        <end position="295"/>
    </location>
</feature>
<feature type="active site" description="Proton donor/acceptor" evidence="1">
    <location>
        <position position="135"/>
    </location>
</feature>
<feature type="active site" description="Schiff-base intermediate with substrate" evidence="1">
    <location>
        <position position="163"/>
    </location>
</feature>
<feature type="binding site" evidence="1">
    <location>
        <position position="47"/>
    </location>
    <ligand>
        <name>pyruvate</name>
        <dbReference type="ChEBI" id="CHEBI:15361"/>
    </ligand>
</feature>
<feature type="binding site" evidence="1">
    <location>
        <position position="204"/>
    </location>
    <ligand>
        <name>pyruvate</name>
        <dbReference type="ChEBI" id="CHEBI:15361"/>
    </ligand>
</feature>
<feature type="site" description="Part of a proton relay during catalysis" evidence="1">
    <location>
        <position position="46"/>
    </location>
</feature>
<feature type="site" description="Part of a proton relay during catalysis" evidence="1">
    <location>
        <position position="109"/>
    </location>
</feature>
<dbReference type="EC" id="4.3.3.7" evidence="1"/>
<dbReference type="EMBL" id="CP000679">
    <property type="protein sequence ID" value="ABP67175.1"/>
    <property type="molecule type" value="Genomic_DNA"/>
</dbReference>
<dbReference type="RefSeq" id="WP_011917111.1">
    <property type="nucleotide sequence ID" value="NC_009437.1"/>
</dbReference>
<dbReference type="SMR" id="A4XJU0"/>
<dbReference type="STRING" id="351627.Csac_1583"/>
<dbReference type="KEGG" id="csc:Csac_1583"/>
<dbReference type="eggNOG" id="COG0329">
    <property type="taxonomic scope" value="Bacteria"/>
</dbReference>
<dbReference type="HOGENOM" id="CLU_049343_7_1_9"/>
<dbReference type="OrthoDB" id="9782828at2"/>
<dbReference type="UniPathway" id="UPA00034">
    <property type="reaction ID" value="UER00017"/>
</dbReference>
<dbReference type="Proteomes" id="UP000000256">
    <property type="component" value="Chromosome"/>
</dbReference>
<dbReference type="GO" id="GO:0005829">
    <property type="term" value="C:cytosol"/>
    <property type="evidence" value="ECO:0007669"/>
    <property type="project" value="TreeGrafter"/>
</dbReference>
<dbReference type="GO" id="GO:0008840">
    <property type="term" value="F:4-hydroxy-tetrahydrodipicolinate synthase activity"/>
    <property type="evidence" value="ECO:0007669"/>
    <property type="project" value="UniProtKB-UniRule"/>
</dbReference>
<dbReference type="GO" id="GO:0019877">
    <property type="term" value="P:diaminopimelate biosynthetic process"/>
    <property type="evidence" value="ECO:0007669"/>
    <property type="project" value="UniProtKB-UniRule"/>
</dbReference>
<dbReference type="GO" id="GO:0009089">
    <property type="term" value="P:lysine biosynthetic process via diaminopimelate"/>
    <property type="evidence" value="ECO:0007669"/>
    <property type="project" value="UniProtKB-UniRule"/>
</dbReference>
<dbReference type="CDD" id="cd00950">
    <property type="entry name" value="DHDPS"/>
    <property type="match status" value="1"/>
</dbReference>
<dbReference type="Gene3D" id="3.20.20.70">
    <property type="entry name" value="Aldolase class I"/>
    <property type="match status" value="1"/>
</dbReference>
<dbReference type="HAMAP" id="MF_00418">
    <property type="entry name" value="DapA"/>
    <property type="match status" value="1"/>
</dbReference>
<dbReference type="InterPro" id="IPR013785">
    <property type="entry name" value="Aldolase_TIM"/>
</dbReference>
<dbReference type="InterPro" id="IPR005263">
    <property type="entry name" value="DapA"/>
</dbReference>
<dbReference type="InterPro" id="IPR002220">
    <property type="entry name" value="DapA-like"/>
</dbReference>
<dbReference type="InterPro" id="IPR020625">
    <property type="entry name" value="Schiff_base-form_aldolases_AS"/>
</dbReference>
<dbReference type="NCBIfam" id="TIGR00674">
    <property type="entry name" value="dapA"/>
    <property type="match status" value="1"/>
</dbReference>
<dbReference type="PANTHER" id="PTHR12128:SF66">
    <property type="entry name" value="4-HYDROXY-2-OXOGLUTARATE ALDOLASE, MITOCHONDRIAL"/>
    <property type="match status" value="1"/>
</dbReference>
<dbReference type="PANTHER" id="PTHR12128">
    <property type="entry name" value="DIHYDRODIPICOLINATE SYNTHASE"/>
    <property type="match status" value="1"/>
</dbReference>
<dbReference type="Pfam" id="PF00701">
    <property type="entry name" value="DHDPS"/>
    <property type="match status" value="1"/>
</dbReference>
<dbReference type="PIRSF" id="PIRSF001365">
    <property type="entry name" value="DHDPS"/>
    <property type="match status" value="1"/>
</dbReference>
<dbReference type="PRINTS" id="PR00146">
    <property type="entry name" value="DHPICSNTHASE"/>
</dbReference>
<dbReference type="SMART" id="SM01130">
    <property type="entry name" value="DHDPS"/>
    <property type="match status" value="1"/>
</dbReference>
<dbReference type="SUPFAM" id="SSF51569">
    <property type="entry name" value="Aldolase"/>
    <property type="match status" value="1"/>
</dbReference>
<dbReference type="PROSITE" id="PS00666">
    <property type="entry name" value="DHDPS_2"/>
    <property type="match status" value="1"/>
</dbReference>
<keyword id="KW-0028">Amino-acid biosynthesis</keyword>
<keyword id="KW-0963">Cytoplasm</keyword>
<keyword id="KW-0220">Diaminopimelate biosynthesis</keyword>
<keyword id="KW-0456">Lyase</keyword>
<keyword id="KW-0457">Lysine biosynthesis</keyword>
<keyword id="KW-0704">Schiff base</keyword>
<gene>
    <name evidence="1" type="primary">dapA</name>
    <name type="ordered locus">Csac_1583</name>
</gene>